<feature type="chain" id="PRO_1000117944" description="Sulfate adenylyltransferase subunit 2">
    <location>
        <begin position="1"/>
        <end position="309"/>
    </location>
</feature>
<reference key="1">
    <citation type="submission" date="2007-12" db="EMBL/GenBank/DDBJ databases">
        <title>Complete sequence of Methylobacterium extorquens PA1.</title>
        <authorList>
            <consortium name="US DOE Joint Genome Institute"/>
            <person name="Copeland A."/>
            <person name="Lucas S."/>
            <person name="Lapidus A."/>
            <person name="Barry K."/>
            <person name="Glavina del Rio T."/>
            <person name="Dalin E."/>
            <person name="Tice H."/>
            <person name="Pitluck S."/>
            <person name="Saunders E."/>
            <person name="Brettin T."/>
            <person name="Bruce D."/>
            <person name="Detter J.C."/>
            <person name="Han C."/>
            <person name="Schmutz J."/>
            <person name="Larimer F."/>
            <person name="Land M."/>
            <person name="Hauser L."/>
            <person name="Kyrpides N."/>
            <person name="Kim E."/>
            <person name="Marx C."/>
            <person name="Richardson P."/>
        </authorList>
    </citation>
    <scope>NUCLEOTIDE SEQUENCE [LARGE SCALE GENOMIC DNA]</scope>
    <source>
        <strain>PA1</strain>
    </source>
</reference>
<accession>A9W4X2</accession>
<gene>
    <name evidence="1" type="primary">cysD</name>
    <name type="ordered locus">Mext_2233</name>
</gene>
<evidence type="ECO:0000255" key="1">
    <source>
        <dbReference type="HAMAP-Rule" id="MF_00064"/>
    </source>
</evidence>
<keyword id="KW-0067">ATP-binding</keyword>
<keyword id="KW-0547">Nucleotide-binding</keyword>
<keyword id="KW-0548">Nucleotidyltransferase</keyword>
<keyword id="KW-0808">Transferase</keyword>
<comment type="function">
    <text evidence="1">With CysN forms the ATP sulfurylase (ATPS) that catalyzes the adenylation of sulfate producing adenosine 5'-phosphosulfate (APS) and diphosphate, the first enzymatic step in sulfur assimilation pathway. APS synthesis involves the formation of a high-energy phosphoric-sulfuric acid anhydride bond driven by GTP hydrolysis by CysN coupled to ATP hydrolysis by CysD.</text>
</comment>
<comment type="catalytic activity">
    <reaction evidence="1">
        <text>sulfate + ATP + H(+) = adenosine 5'-phosphosulfate + diphosphate</text>
        <dbReference type="Rhea" id="RHEA:18133"/>
        <dbReference type="ChEBI" id="CHEBI:15378"/>
        <dbReference type="ChEBI" id="CHEBI:16189"/>
        <dbReference type="ChEBI" id="CHEBI:30616"/>
        <dbReference type="ChEBI" id="CHEBI:33019"/>
        <dbReference type="ChEBI" id="CHEBI:58243"/>
        <dbReference type="EC" id="2.7.7.4"/>
    </reaction>
</comment>
<comment type="pathway">
    <text evidence="1">Sulfur metabolism; hydrogen sulfide biosynthesis; sulfite from sulfate: step 1/3.</text>
</comment>
<comment type="subunit">
    <text evidence="1">Heterodimer composed of CysD, the smaller subunit, and CysN.</text>
</comment>
<comment type="similarity">
    <text evidence="1">Belongs to the PAPS reductase family. CysD subfamily.</text>
</comment>
<dbReference type="EC" id="2.7.7.4" evidence="1"/>
<dbReference type="EMBL" id="CP000908">
    <property type="protein sequence ID" value="ABY30628.1"/>
    <property type="molecule type" value="Genomic_DNA"/>
</dbReference>
<dbReference type="RefSeq" id="WP_003606413.1">
    <property type="nucleotide sequence ID" value="NC_010172.1"/>
</dbReference>
<dbReference type="SMR" id="A9W4X2"/>
<dbReference type="KEGG" id="mex:Mext_2233"/>
<dbReference type="eggNOG" id="COG0175">
    <property type="taxonomic scope" value="Bacteria"/>
</dbReference>
<dbReference type="HOGENOM" id="CLU_043026_0_0_5"/>
<dbReference type="BioCyc" id="MEXT419610:MEXT_RS11265-MONOMER"/>
<dbReference type="UniPathway" id="UPA00140">
    <property type="reaction ID" value="UER00204"/>
</dbReference>
<dbReference type="GO" id="GO:0005524">
    <property type="term" value="F:ATP binding"/>
    <property type="evidence" value="ECO:0007669"/>
    <property type="project" value="UniProtKB-KW"/>
</dbReference>
<dbReference type="GO" id="GO:0004781">
    <property type="term" value="F:sulfate adenylyltransferase (ATP) activity"/>
    <property type="evidence" value="ECO:0007669"/>
    <property type="project" value="UniProtKB-UniRule"/>
</dbReference>
<dbReference type="GO" id="GO:0070814">
    <property type="term" value="P:hydrogen sulfide biosynthetic process"/>
    <property type="evidence" value="ECO:0007669"/>
    <property type="project" value="UniProtKB-UniRule"/>
</dbReference>
<dbReference type="GO" id="GO:0000103">
    <property type="term" value="P:sulfate assimilation"/>
    <property type="evidence" value="ECO:0007669"/>
    <property type="project" value="UniProtKB-UniRule"/>
</dbReference>
<dbReference type="FunFam" id="3.40.50.620:FF:000002">
    <property type="entry name" value="Sulfate adenylyltransferase subunit 2"/>
    <property type="match status" value="1"/>
</dbReference>
<dbReference type="Gene3D" id="3.40.50.620">
    <property type="entry name" value="HUPs"/>
    <property type="match status" value="1"/>
</dbReference>
<dbReference type="HAMAP" id="MF_00064">
    <property type="entry name" value="Sulf_adenylyltr_sub2"/>
    <property type="match status" value="1"/>
</dbReference>
<dbReference type="InterPro" id="IPR002500">
    <property type="entry name" value="PAPS_reduct_dom"/>
</dbReference>
<dbReference type="InterPro" id="IPR014729">
    <property type="entry name" value="Rossmann-like_a/b/a_fold"/>
</dbReference>
<dbReference type="InterPro" id="IPR011784">
    <property type="entry name" value="SO4_adenylTrfase_ssu"/>
</dbReference>
<dbReference type="InterPro" id="IPR050128">
    <property type="entry name" value="Sulfate_adenylyltrnsfr_sub2"/>
</dbReference>
<dbReference type="NCBIfam" id="TIGR02039">
    <property type="entry name" value="CysD"/>
    <property type="match status" value="1"/>
</dbReference>
<dbReference type="NCBIfam" id="NF003587">
    <property type="entry name" value="PRK05253.1"/>
    <property type="match status" value="1"/>
</dbReference>
<dbReference type="NCBIfam" id="NF009214">
    <property type="entry name" value="PRK12563.1"/>
    <property type="match status" value="1"/>
</dbReference>
<dbReference type="PANTHER" id="PTHR43196">
    <property type="entry name" value="SULFATE ADENYLYLTRANSFERASE SUBUNIT 2"/>
    <property type="match status" value="1"/>
</dbReference>
<dbReference type="PANTHER" id="PTHR43196:SF1">
    <property type="entry name" value="SULFATE ADENYLYLTRANSFERASE SUBUNIT 2"/>
    <property type="match status" value="1"/>
</dbReference>
<dbReference type="Pfam" id="PF01507">
    <property type="entry name" value="PAPS_reduct"/>
    <property type="match status" value="1"/>
</dbReference>
<dbReference type="PIRSF" id="PIRSF002936">
    <property type="entry name" value="CysDAde_trans"/>
    <property type="match status" value="1"/>
</dbReference>
<dbReference type="SUPFAM" id="SSF52402">
    <property type="entry name" value="Adenine nucleotide alpha hydrolases-like"/>
    <property type="match status" value="1"/>
</dbReference>
<protein>
    <recommendedName>
        <fullName evidence="1">Sulfate adenylyltransferase subunit 2</fullName>
        <ecNumber evidence="1">2.7.7.4</ecNumber>
    </recommendedName>
    <alternativeName>
        <fullName evidence="1">ATP-sulfurylase small subunit</fullName>
    </alternativeName>
    <alternativeName>
        <fullName evidence="1">Sulfate adenylate transferase</fullName>
        <shortName evidence="1">SAT</shortName>
    </alternativeName>
</protein>
<name>CYSD_METEP</name>
<organism>
    <name type="scientific">Methylorubrum extorquens (strain PA1)</name>
    <name type="common">Methylobacterium extorquens</name>
    <dbReference type="NCBI Taxonomy" id="419610"/>
    <lineage>
        <taxon>Bacteria</taxon>
        <taxon>Pseudomonadati</taxon>
        <taxon>Pseudomonadota</taxon>
        <taxon>Alphaproteobacteria</taxon>
        <taxon>Hyphomicrobiales</taxon>
        <taxon>Methylobacteriaceae</taxon>
        <taxon>Methylorubrum</taxon>
    </lineage>
</organism>
<sequence>MSAAVAAPARTRLTHLQRLEAESIHIFREAVAEAENPVMLYSIGKDSSVLLHLALKAFAPGRLPFPLMHIDTTWKFREMIAFRDRRAKELGLELIVHTNQDGLAKGVGPVSHGSEVHTDVMKTQALRQALDKYKYDVAFGGARRDEEASRAKERIVSLRNGQHRWDPKRQRAEPWHLYNFKKRRGESFRVFPLSNWTELDIWLYIEQENIPIVPLYFAAERPVVERDGQLIMVDDERFPLEPGETPQQRQVRFRTLGCYPLTGAVESPAATLPEIIGETLAARTSERQGRVIDKDGAGAMERKKQEGYF</sequence>
<proteinExistence type="inferred from homology"/>